<sequence length="99" mass="11516">MRIERLYEVVRAPHISEKSTLAAEERNEVVFKVAVDARKAEIRQAVEQLFDVKVRDVRTVKMKGKRKRFGRLEGKRPDWKKAYVTLEEGNEIDFLGGAE</sequence>
<proteinExistence type="inferred from homology"/>
<accession>Q0ABH3</accession>
<evidence type="ECO:0000255" key="1">
    <source>
        <dbReference type="HAMAP-Rule" id="MF_01369"/>
    </source>
</evidence>
<evidence type="ECO:0000305" key="2"/>
<comment type="function">
    <text evidence="1">One of the early assembly proteins it binds 23S rRNA. One of the proteins that surrounds the polypeptide exit tunnel on the outside of the ribosome. Forms the main docking site for trigger factor binding to the ribosome.</text>
</comment>
<comment type="subunit">
    <text evidence="1">Part of the 50S ribosomal subunit. Contacts protein L29, and trigger factor when it is bound to the ribosome.</text>
</comment>
<comment type="similarity">
    <text evidence="1">Belongs to the universal ribosomal protein uL23 family.</text>
</comment>
<organism>
    <name type="scientific">Alkalilimnicola ehrlichii (strain ATCC BAA-1101 / DSM 17681 / MLHE-1)</name>
    <dbReference type="NCBI Taxonomy" id="187272"/>
    <lineage>
        <taxon>Bacteria</taxon>
        <taxon>Pseudomonadati</taxon>
        <taxon>Pseudomonadota</taxon>
        <taxon>Gammaproteobacteria</taxon>
        <taxon>Chromatiales</taxon>
        <taxon>Ectothiorhodospiraceae</taxon>
        <taxon>Alkalilimnicola</taxon>
    </lineage>
</organism>
<dbReference type="EMBL" id="CP000453">
    <property type="protein sequence ID" value="ABI55814.1"/>
    <property type="molecule type" value="Genomic_DNA"/>
</dbReference>
<dbReference type="RefSeq" id="WP_011628209.1">
    <property type="nucleotide sequence ID" value="NC_008340.1"/>
</dbReference>
<dbReference type="SMR" id="Q0ABH3"/>
<dbReference type="KEGG" id="aeh:Mlg_0460"/>
<dbReference type="eggNOG" id="COG0089">
    <property type="taxonomic scope" value="Bacteria"/>
</dbReference>
<dbReference type="HOGENOM" id="CLU_037562_3_1_6"/>
<dbReference type="OrthoDB" id="9793353at2"/>
<dbReference type="Proteomes" id="UP000001962">
    <property type="component" value="Chromosome"/>
</dbReference>
<dbReference type="GO" id="GO:1990904">
    <property type="term" value="C:ribonucleoprotein complex"/>
    <property type="evidence" value="ECO:0007669"/>
    <property type="project" value="UniProtKB-KW"/>
</dbReference>
<dbReference type="GO" id="GO:0005840">
    <property type="term" value="C:ribosome"/>
    <property type="evidence" value="ECO:0007669"/>
    <property type="project" value="UniProtKB-KW"/>
</dbReference>
<dbReference type="GO" id="GO:0019843">
    <property type="term" value="F:rRNA binding"/>
    <property type="evidence" value="ECO:0007669"/>
    <property type="project" value="UniProtKB-UniRule"/>
</dbReference>
<dbReference type="GO" id="GO:0003735">
    <property type="term" value="F:structural constituent of ribosome"/>
    <property type="evidence" value="ECO:0007669"/>
    <property type="project" value="InterPro"/>
</dbReference>
<dbReference type="GO" id="GO:0006412">
    <property type="term" value="P:translation"/>
    <property type="evidence" value="ECO:0007669"/>
    <property type="project" value="UniProtKB-UniRule"/>
</dbReference>
<dbReference type="FunFam" id="3.30.70.330:FF:000001">
    <property type="entry name" value="50S ribosomal protein L23"/>
    <property type="match status" value="1"/>
</dbReference>
<dbReference type="Gene3D" id="3.30.70.330">
    <property type="match status" value="1"/>
</dbReference>
<dbReference type="HAMAP" id="MF_01369_B">
    <property type="entry name" value="Ribosomal_uL23_B"/>
    <property type="match status" value="1"/>
</dbReference>
<dbReference type="InterPro" id="IPR012677">
    <property type="entry name" value="Nucleotide-bd_a/b_plait_sf"/>
</dbReference>
<dbReference type="InterPro" id="IPR013025">
    <property type="entry name" value="Ribosomal_uL23-like"/>
</dbReference>
<dbReference type="InterPro" id="IPR012678">
    <property type="entry name" value="Ribosomal_uL23/eL15/eS24_sf"/>
</dbReference>
<dbReference type="InterPro" id="IPR001014">
    <property type="entry name" value="Ribosomal_uL23_CS"/>
</dbReference>
<dbReference type="NCBIfam" id="NF004358">
    <property type="entry name" value="PRK05738.1-1"/>
    <property type="match status" value="1"/>
</dbReference>
<dbReference type="NCBIfam" id="NF004359">
    <property type="entry name" value="PRK05738.1-3"/>
    <property type="match status" value="1"/>
</dbReference>
<dbReference type="NCBIfam" id="NF004363">
    <property type="entry name" value="PRK05738.2-4"/>
    <property type="match status" value="1"/>
</dbReference>
<dbReference type="NCBIfam" id="NF004366">
    <property type="entry name" value="PRK05738.3-2"/>
    <property type="match status" value="1"/>
</dbReference>
<dbReference type="PANTHER" id="PTHR11620">
    <property type="entry name" value="60S RIBOSOMAL PROTEIN L23A"/>
    <property type="match status" value="1"/>
</dbReference>
<dbReference type="Pfam" id="PF00276">
    <property type="entry name" value="Ribosomal_L23"/>
    <property type="match status" value="1"/>
</dbReference>
<dbReference type="SUPFAM" id="SSF54189">
    <property type="entry name" value="Ribosomal proteins S24e, L23 and L15e"/>
    <property type="match status" value="1"/>
</dbReference>
<dbReference type="PROSITE" id="PS00050">
    <property type="entry name" value="RIBOSOMAL_L23"/>
    <property type="match status" value="1"/>
</dbReference>
<protein>
    <recommendedName>
        <fullName evidence="1">Large ribosomal subunit protein uL23</fullName>
    </recommendedName>
    <alternativeName>
        <fullName evidence="2">50S ribosomal protein L23</fullName>
    </alternativeName>
</protein>
<feature type="chain" id="PRO_0000272694" description="Large ribosomal subunit protein uL23">
    <location>
        <begin position="1"/>
        <end position="99"/>
    </location>
</feature>
<reference key="1">
    <citation type="submission" date="2006-08" db="EMBL/GenBank/DDBJ databases">
        <title>Complete sequence of Alkalilimnicola ehrilichei MLHE-1.</title>
        <authorList>
            <person name="Copeland A."/>
            <person name="Lucas S."/>
            <person name="Lapidus A."/>
            <person name="Barry K."/>
            <person name="Detter J.C."/>
            <person name="Glavina del Rio T."/>
            <person name="Hammon N."/>
            <person name="Israni S."/>
            <person name="Dalin E."/>
            <person name="Tice H."/>
            <person name="Pitluck S."/>
            <person name="Sims D."/>
            <person name="Brettin T."/>
            <person name="Bruce D."/>
            <person name="Han C."/>
            <person name="Tapia R."/>
            <person name="Gilna P."/>
            <person name="Schmutz J."/>
            <person name="Larimer F."/>
            <person name="Land M."/>
            <person name="Hauser L."/>
            <person name="Kyrpides N."/>
            <person name="Mikhailova N."/>
            <person name="Oremland R.S."/>
            <person name="Hoeft S.E."/>
            <person name="Switzer-Blum J."/>
            <person name="Kulp T."/>
            <person name="King G."/>
            <person name="Tabita R."/>
            <person name="Witte B."/>
            <person name="Santini J.M."/>
            <person name="Basu P."/>
            <person name="Hollibaugh J.T."/>
            <person name="Xie G."/>
            <person name="Stolz J.F."/>
            <person name="Richardson P."/>
        </authorList>
    </citation>
    <scope>NUCLEOTIDE SEQUENCE [LARGE SCALE GENOMIC DNA]</scope>
    <source>
        <strain>ATCC BAA-1101 / DSM 17681 / MLHE-1</strain>
    </source>
</reference>
<gene>
    <name evidence="1" type="primary">rplW</name>
    <name type="ordered locus">Mlg_0460</name>
</gene>
<keyword id="KW-1185">Reference proteome</keyword>
<keyword id="KW-0687">Ribonucleoprotein</keyword>
<keyword id="KW-0689">Ribosomal protein</keyword>
<keyword id="KW-0694">RNA-binding</keyword>
<keyword id="KW-0699">rRNA-binding</keyword>
<name>RL23_ALKEH</name>